<name>DAAF1_MOUSE</name>
<organism>
    <name type="scientific">Mus musculus</name>
    <name type="common">Mouse</name>
    <dbReference type="NCBI Taxonomy" id="10090"/>
    <lineage>
        <taxon>Eukaryota</taxon>
        <taxon>Metazoa</taxon>
        <taxon>Chordata</taxon>
        <taxon>Craniata</taxon>
        <taxon>Vertebrata</taxon>
        <taxon>Euteleostomi</taxon>
        <taxon>Mammalia</taxon>
        <taxon>Eutheria</taxon>
        <taxon>Euarchontoglires</taxon>
        <taxon>Glires</taxon>
        <taxon>Rodentia</taxon>
        <taxon>Myomorpha</taxon>
        <taxon>Muroidea</taxon>
        <taxon>Muridae</taxon>
        <taxon>Murinae</taxon>
        <taxon>Mus</taxon>
        <taxon>Mus</taxon>
    </lineage>
</organism>
<dbReference type="EMBL" id="AK006656">
    <property type="protein sequence ID" value="BAB24692.1"/>
    <property type="molecule type" value="mRNA"/>
</dbReference>
<dbReference type="EMBL" id="AK019633">
    <property type="protein sequence ID" value="BAB31818.1"/>
    <property type="molecule type" value="mRNA"/>
</dbReference>
<dbReference type="EMBL" id="BC050751">
    <property type="protein sequence ID" value="AAH50751.1"/>
    <property type="molecule type" value="mRNA"/>
</dbReference>
<dbReference type="CCDS" id="CCDS22709.1"/>
<dbReference type="RefSeq" id="NP_080924.1">
    <property type="nucleotide sequence ID" value="NM_026648.4"/>
</dbReference>
<dbReference type="SMR" id="Q9D2H9"/>
<dbReference type="BioGRID" id="212773">
    <property type="interactions" value="1"/>
</dbReference>
<dbReference type="FunCoup" id="Q9D2H9">
    <property type="interactions" value="278"/>
</dbReference>
<dbReference type="IntAct" id="Q9D2H9">
    <property type="interactions" value="2"/>
</dbReference>
<dbReference type="MINT" id="Q9D2H9"/>
<dbReference type="STRING" id="10090.ENSMUSP00000090790"/>
<dbReference type="GlyGen" id="Q9D2H9">
    <property type="glycosylation" value="2 sites, 1 N-linked glycan (1 site)"/>
</dbReference>
<dbReference type="iPTMnet" id="Q9D2H9"/>
<dbReference type="PhosphoSitePlus" id="Q9D2H9"/>
<dbReference type="SwissPalm" id="Q9D2H9"/>
<dbReference type="PaxDb" id="10090-ENSMUSP00000090790"/>
<dbReference type="ProteomicsDB" id="279230"/>
<dbReference type="Antibodypedia" id="30549">
    <property type="antibodies" value="195 antibodies from 15 providers"/>
</dbReference>
<dbReference type="DNASU" id="68270"/>
<dbReference type="Ensembl" id="ENSMUST00000093100.3">
    <property type="protein sequence ID" value="ENSMUSP00000090790.3"/>
    <property type="gene ID" value="ENSMUSG00000031831.7"/>
</dbReference>
<dbReference type="GeneID" id="68270"/>
<dbReference type="KEGG" id="mmu:68270"/>
<dbReference type="UCSC" id="uc009npw.1">
    <property type="organism name" value="mouse"/>
</dbReference>
<dbReference type="AGR" id="MGI:1915520"/>
<dbReference type="CTD" id="123872"/>
<dbReference type="MGI" id="MGI:1915520">
    <property type="gene designation" value="Dnaaf1"/>
</dbReference>
<dbReference type="VEuPathDB" id="HostDB:ENSMUSG00000031831"/>
<dbReference type="eggNOG" id="ENOG502QQFE">
    <property type="taxonomic scope" value="Eukaryota"/>
</dbReference>
<dbReference type="GeneTree" id="ENSGT00940000158494"/>
<dbReference type="HOGENOM" id="CLU_027574_0_0_1"/>
<dbReference type="InParanoid" id="Q9D2H9"/>
<dbReference type="OMA" id="SWRVETE"/>
<dbReference type="OrthoDB" id="1904536at2759"/>
<dbReference type="PhylomeDB" id="Q9D2H9"/>
<dbReference type="TreeFam" id="TF315818"/>
<dbReference type="BioGRID-ORCS" id="68270">
    <property type="hits" value="2 hits in 78 CRISPR screens"/>
</dbReference>
<dbReference type="ChiTaRS" id="Dnaaf1">
    <property type="organism name" value="mouse"/>
</dbReference>
<dbReference type="PRO" id="PR:Q9D2H9"/>
<dbReference type="Proteomes" id="UP000000589">
    <property type="component" value="Chromosome 8"/>
</dbReference>
<dbReference type="RNAct" id="Q9D2H9">
    <property type="molecule type" value="protein"/>
</dbReference>
<dbReference type="Bgee" id="ENSMUSG00000031831">
    <property type="expression patterns" value="Expressed in seminiferous tubule of testis and 54 other cell types or tissues"/>
</dbReference>
<dbReference type="GO" id="GO:0005930">
    <property type="term" value="C:axoneme"/>
    <property type="evidence" value="ECO:0000250"/>
    <property type="project" value="UniProtKB"/>
</dbReference>
<dbReference type="GO" id="GO:0070840">
    <property type="term" value="F:dynein complex binding"/>
    <property type="evidence" value="ECO:0000250"/>
    <property type="project" value="UniProtKB"/>
</dbReference>
<dbReference type="GO" id="GO:0060271">
    <property type="term" value="P:cilium assembly"/>
    <property type="evidence" value="ECO:0000250"/>
    <property type="project" value="UniProtKB"/>
</dbReference>
<dbReference type="GO" id="GO:0003341">
    <property type="term" value="P:cilium movement"/>
    <property type="evidence" value="ECO:0007669"/>
    <property type="project" value="Ensembl"/>
</dbReference>
<dbReference type="GO" id="GO:0071907">
    <property type="term" value="P:determination of digestive tract left/right asymmetry"/>
    <property type="evidence" value="ECO:0007669"/>
    <property type="project" value="Ensembl"/>
</dbReference>
<dbReference type="GO" id="GO:0071910">
    <property type="term" value="P:determination of liver left/right asymmetry"/>
    <property type="evidence" value="ECO:0007669"/>
    <property type="project" value="Ensembl"/>
</dbReference>
<dbReference type="GO" id="GO:0035469">
    <property type="term" value="P:determination of pancreatic left/right asymmetry"/>
    <property type="evidence" value="ECO:0007669"/>
    <property type="project" value="Ensembl"/>
</dbReference>
<dbReference type="GO" id="GO:0001947">
    <property type="term" value="P:heart looping"/>
    <property type="evidence" value="ECO:0007669"/>
    <property type="project" value="Ensembl"/>
</dbReference>
<dbReference type="GO" id="GO:0036159">
    <property type="term" value="P:inner dynein arm assembly"/>
    <property type="evidence" value="ECO:0007669"/>
    <property type="project" value="Ensembl"/>
</dbReference>
<dbReference type="GO" id="GO:0030324">
    <property type="term" value="P:lung development"/>
    <property type="evidence" value="ECO:0007669"/>
    <property type="project" value="Ensembl"/>
</dbReference>
<dbReference type="GO" id="GO:0044458">
    <property type="term" value="P:motile cilium assembly"/>
    <property type="evidence" value="ECO:0007669"/>
    <property type="project" value="Ensembl"/>
</dbReference>
<dbReference type="GO" id="GO:0036158">
    <property type="term" value="P:outer dynein arm assembly"/>
    <property type="evidence" value="ECO:0007669"/>
    <property type="project" value="Ensembl"/>
</dbReference>
<dbReference type="GO" id="GO:0003356">
    <property type="term" value="P:regulation of cilium beat frequency"/>
    <property type="evidence" value="ECO:0007669"/>
    <property type="project" value="Ensembl"/>
</dbReference>
<dbReference type="FunFam" id="3.80.10.10:FF:000349">
    <property type="entry name" value="Dynein assembly factor 1, axonemal"/>
    <property type="match status" value="1"/>
</dbReference>
<dbReference type="FunFam" id="3.80.10.10:FF:000394">
    <property type="entry name" value="Dynein assembly factor 1, axonemal"/>
    <property type="match status" value="1"/>
</dbReference>
<dbReference type="Gene3D" id="3.80.10.10">
    <property type="entry name" value="Ribonuclease Inhibitor"/>
    <property type="match status" value="2"/>
</dbReference>
<dbReference type="InterPro" id="IPR050576">
    <property type="entry name" value="Cilia_flagella_integrity"/>
</dbReference>
<dbReference type="InterPro" id="IPR001611">
    <property type="entry name" value="Leu-rich_rpt"/>
</dbReference>
<dbReference type="InterPro" id="IPR032675">
    <property type="entry name" value="LRR_dom_sf"/>
</dbReference>
<dbReference type="PANTHER" id="PTHR45973:SF19">
    <property type="entry name" value="DYNEIN AXONEMAL ASSEMBLY FACTOR 1"/>
    <property type="match status" value="1"/>
</dbReference>
<dbReference type="PANTHER" id="PTHR45973">
    <property type="entry name" value="PROTEIN PHOSPHATASE 1 REGULATORY SUBUNIT SDS22-RELATED"/>
    <property type="match status" value="1"/>
</dbReference>
<dbReference type="Pfam" id="PF14580">
    <property type="entry name" value="LRR_9"/>
    <property type="match status" value="1"/>
</dbReference>
<dbReference type="SMART" id="SM00365">
    <property type="entry name" value="LRR_SD22"/>
    <property type="match status" value="4"/>
</dbReference>
<dbReference type="SUPFAM" id="SSF52075">
    <property type="entry name" value="Outer arm dynein light chain 1"/>
    <property type="match status" value="1"/>
</dbReference>
<dbReference type="PROSITE" id="PS51450">
    <property type="entry name" value="LRR"/>
    <property type="match status" value="6"/>
</dbReference>
<keyword id="KW-0966">Cell projection</keyword>
<keyword id="KW-0969">Cilium</keyword>
<keyword id="KW-0433">Leucine-rich repeat</keyword>
<keyword id="KW-0597">Phosphoprotein</keyword>
<keyword id="KW-1185">Reference proteome</keyword>
<keyword id="KW-0677">Repeat</keyword>
<proteinExistence type="evidence at protein level"/>
<comment type="function">
    <text evidence="1">Cilium-specific protein required for the stability of the ciliary architecture. Plays a role in cytoplasmic preassembly of dynein arms (By similarity). Involved in regulation of microtubule-based cilia and actin-based brush border microvilli (By similarity).</text>
</comment>
<comment type="subcellular location">
    <subcellularLocation>
        <location evidence="1">Cell projection</location>
        <location evidence="1">Cilium</location>
    </subcellularLocation>
</comment>
<comment type="similarity">
    <text evidence="4">Belongs to the DNAAF1 family.</text>
</comment>
<evidence type="ECO:0000250" key="1"/>
<evidence type="ECO:0000250" key="2">
    <source>
        <dbReference type="UniProtKB" id="Q6AYH9"/>
    </source>
</evidence>
<evidence type="ECO:0000256" key="3">
    <source>
        <dbReference type="SAM" id="MobiDB-lite"/>
    </source>
</evidence>
<evidence type="ECO:0000305" key="4"/>
<evidence type="ECO:0007744" key="5">
    <source>
    </source>
</evidence>
<reference key="1">
    <citation type="journal article" date="2005" name="Science">
        <title>The transcriptional landscape of the mammalian genome.</title>
        <authorList>
            <person name="Carninci P."/>
            <person name="Kasukawa T."/>
            <person name="Katayama S."/>
            <person name="Gough J."/>
            <person name="Frith M.C."/>
            <person name="Maeda N."/>
            <person name="Oyama R."/>
            <person name="Ravasi T."/>
            <person name="Lenhard B."/>
            <person name="Wells C."/>
            <person name="Kodzius R."/>
            <person name="Shimokawa K."/>
            <person name="Bajic V.B."/>
            <person name="Brenner S.E."/>
            <person name="Batalov S."/>
            <person name="Forrest A.R."/>
            <person name="Zavolan M."/>
            <person name="Davis M.J."/>
            <person name="Wilming L.G."/>
            <person name="Aidinis V."/>
            <person name="Allen J.E."/>
            <person name="Ambesi-Impiombato A."/>
            <person name="Apweiler R."/>
            <person name="Aturaliya R.N."/>
            <person name="Bailey T.L."/>
            <person name="Bansal M."/>
            <person name="Baxter L."/>
            <person name="Beisel K.W."/>
            <person name="Bersano T."/>
            <person name="Bono H."/>
            <person name="Chalk A.M."/>
            <person name="Chiu K.P."/>
            <person name="Choudhary V."/>
            <person name="Christoffels A."/>
            <person name="Clutterbuck D.R."/>
            <person name="Crowe M.L."/>
            <person name="Dalla E."/>
            <person name="Dalrymple B.P."/>
            <person name="de Bono B."/>
            <person name="Della Gatta G."/>
            <person name="di Bernardo D."/>
            <person name="Down T."/>
            <person name="Engstrom P."/>
            <person name="Fagiolini M."/>
            <person name="Faulkner G."/>
            <person name="Fletcher C.F."/>
            <person name="Fukushima T."/>
            <person name="Furuno M."/>
            <person name="Futaki S."/>
            <person name="Gariboldi M."/>
            <person name="Georgii-Hemming P."/>
            <person name="Gingeras T.R."/>
            <person name="Gojobori T."/>
            <person name="Green R.E."/>
            <person name="Gustincich S."/>
            <person name="Harbers M."/>
            <person name="Hayashi Y."/>
            <person name="Hensch T.K."/>
            <person name="Hirokawa N."/>
            <person name="Hill D."/>
            <person name="Huminiecki L."/>
            <person name="Iacono M."/>
            <person name="Ikeo K."/>
            <person name="Iwama A."/>
            <person name="Ishikawa T."/>
            <person name="Jakt M."/>
            <person name="Kanapin A."/>
            <person name="Katoh M."/>
            <person name="Kawasawa Y."/>
            <person name="Kelso J."/>
            <person name="Kitamura H."/>
            <person name="Kitano H."/>
            <person name="Kollias G."/>
            <person name="Krishnan S.P."/>
            <person name="Kruger A."/>
            <person name="Kummerfeld S.K."/>
            <person name="Kurochkin I.V."/>
            <person name="Lareau L.F."/>
            <person name="Lazarevic D."/>
            <person name="Lipovich L."/>
            <person name="Liu J."/>
            <person name="Liuni S."/>
            <person name="McWilliam S."/>
            <person name="Madan Babu M."/>
            <person name="Madera M."/>
            <person name="Marchionni L."/>
            <person name="Matsuda H."/>
            <person name="Matsuzawa S."/>
            <person name="Miki H."/>
            <person name="Mignone F."/>
            <person name="Miyake S."/>
            <person name="Morris K."/>
            <person name="Mottagui-Tabar S."/>
            <person name="Mulder N."/>
            <person name="Nakano N."/>
            <person name="Nakauchi H."/>
            <person name="Ng P."/>
            <person name="Nilsson R."/>
            <person name="Nishiguchi S."/>
            <person name="Nishikawa S."/>
            <person name="Nori F."/>
            <person name="Ohara O."/>
            <person name="Okazaki Y."/>
            <person name="Orlando V."/>
            <person name="Pang K.C."/>
            <person name="Pavan W.J."/>
            <person name="Pavesi G."/>
            <person name="Pesole G."/>
            <person name="Petrovsky N."/>
            <person name="Piazza S."/>
            <person name="Reed J."/>
            <person name="Reid J.F."/>
            <person name="Ring B.Z."/>
            <person name="Ringwald M."/>
            <person name="Rost B."/>
            <person name="Ruan Y."/>
            <person name="Salzberg S.L."/>
            <person name="Sandelin A."/>
            <person name="Schneider C."/>
            <person name="Schoenbach C."/>
            <person name="Sekiguchi K."/>
            <person name="Semple C.A."/>
            <person name="Seno S."/>
            <person name="Sessa L."/>
            <person name="Sheng Y."/>
            <person name="Shibata Y."/>
            <person name="Shimada H."/>
            <person name="Shimada K."/>
            <person name="Silva D."/>
            <person name="Sinclair B."/>
            <person name="Sperling S."/>
            <person name="Stupka E."/>
            <person name="Sugiura K."/>
            <person name="Sultana R."/>
            <person name="Takenaka Y."/>
            <person name="Taki K."/>
            <person name="Tammoja K."/>
            <person name="Tan S.L."/>
            <person name="Tang S."/>
            <person name="Taylor M.S."/>
            <person name="Tegner J."/>
            <person name="Teichmann S.A."/>
            <person name="Ueda H.R."/>
            <person name="van Nimwegen E."/>
            <person name="Verardo R."/>
            <person name="Wei C.L."/>
            <person name="Yagi K."/>
            <person name="Yamanishi H."/>
            <person name="Zabarovsky E."/>
            <person name="Zhu S."/>
            <person name="Zimmer A."/>
            <person name="Hide W."/>
            <person name="Bult C."/>
            <person name="Grimmond S.M."/>
            <person name="Teasdale R.D."/>
            <person name="Liu E.T."/>
            <person name="Brusic V."/>
            <person name="Quackenbush J."/>
            <person name="Wahlestedt C."/>
            <person name="Mattick J.S."/>
            <person name="Hume D.A."/>
            <person name="Kai C."/>
            <person name="Sasaki D."/>
            <person name="Tomaru Y."/>
            <person name="Fukuda S."/>
            <person name="Kanamori-Katayama M."/>
            <person name="Suzuki M."/>
            <person name="Aoki J."/>
            <person name="Arakawa T."/>
            <person name="Iida J."/>
            <person name="Imamura K."/>
            <person name="Itoh M."/>
            <person name="Kato T."/>
            <person name="Kawaji H."/>
            <person name="Kawagashira N."/>
            <person name="Kawashima T."/>
            <person name="Kojima M."/>
            <person name="Kondo S."/>
            <person name="Konno H."/>
            <person name="Nakano K."/>
            <person name="Ninomiya N."/>
            <person name="Nishio T."/>
            <person name="Okada M."/>
            <person name="Plessy C."/>
            <person name="Shibata K."/>
            <person name="Shiraki T."/>
            <person name="Suzuki S."/>
            <person name="Tagami M."/>
            <person name="Waki K."/>
            <person name="Watahiki A."/>
            <person name="Okamura-Oho Y."/>
            <person name="Suzuki H."/>
            <person name="Kawai J."/>
            <person name="Hayashizaki Y."/>
        </authorList>
    </citation>
    <scope>NUCLEOTIDE SEQUENCE [LARGE SCALE MRNA]</scope>
    <source>
        <strain>C57BL/6J</strain>
        <tissue>Testis</tissue>
    </source>
</reference>
<reference key="2">
    <citation type="journal article" date="2004" name="Genome Res.">
        <title>The status, quality, and expansion of the NIH full-length cDNA project: the Mammalian Gene Collection (MGC).</title>
        <authorList>
            <consortium name="The MGC Project Team"/>
        </authorList>
    </citation>
    <scope>NUCLEOTIDE SEQUENCE [LARGE SCALE MRNA]</scope>
    <source>
        <tissue>Testis</tissue>
    </source>
</reference>
<reference key="3">
    <citation type="journal article" date="2010" name="Cell">
        <title>A tissue-specific atlas of mouse protein phosphorylation and expression.</title>
        <authorList>
            <person name="Huttlin E.L."/>
            <person name="Jedrychowski M.P."/>
            <person name="Elias J.E."/>
            <person name="Goswami T."/>
            <person name="Rad R."/>
            <person name="Beausoleil S.A."/>
            <person name="Villen J."/>
            <person name="Haas W."/>
            <person name="Sowa M.E."/>
            <person name="Gygi S.P."/>
        </authorList>
    </citation>
    <scope>PHOSPHORYLATION [LARGE SCALE ANALYSIS] AT THR-462; SER-465 AND SER-488</scope>
    <scope>IDENTIFICATION BY MASS SPECTROMETRY [LARGE SCALE ANALYSIS]</scope>
    <source>
        <tissue>Testis</tissue>
    </source>
</reference>
<accession>Q9D2H9</accession>
<accession>Q9CVS9</accession>
<feature type="chain" id="PRO_0000232890" description="Dynein axonemal assembly factor 1">
    <location>
        <begin position="1"/>
        <end position="634"/>
    </location>
</feature>
<feature type="repeat" description="LRR 1">
    <location>
        <begin position="101"/>
        <end position="123"/>
    </location>
</feature>
<feature type="repeat" description="LRR 2">
    <location>
        <begin position="124"/>
        <end position="145"/>
    </location>
</feature>
<feature type="repeat" description="LRR 3">
    <location>
        <begin position="146"/>
        <end position="167"/>
    </location>
</feature>
<feature type="repeat" description="LRR 4">
    <location>
        <begin position="168"/>
        <end position="189"/>
    </location>
</feature>
<feature type="repeat" description="LRR 5">
    <location>
        <begin position="190"/>
        <end position="211"/>
    </location>
</feature>
<feature type="repeat" description="LRR 6">
    <location>
        <begin position="215"/>
        <end position="236"/>
    </location>
</feature>
<feature type="domain" description="LRRCT">
    <location>
        <begin position="249"/>
        <end position="288"/>
    </location>
</feature>
<feature type="region of interest" description="Disordered" evidence="3">
    <location>
        <begin position="1"/>
        <end position="80"/>
    </location>
</feature>
<feature type="region of interest" description="Disordered" evidence="3">
    <location>
        <begin position="326"/>
        <end position="358"/>
    </location>
</feature>
<feature type="region of interest" description="Disordered" evidence="3">
    <location>
        <begin position="481"/>
        <end position="505"/>
    </location>
</feature>
<feature type="region of interest" description="Disordered" evidence="3">
    <location>
        <begin position="559"/>
        <end position="634"/>
    </location>
</feature>
<feature type="compositionally biased region" description="Basic and acidic residues" evidence="3">
    <location>
        <begin position="22"/>
        <end position="42"/>
    </location>
</feature>
<feature type="compositionally biased region" description="Polar residues" evidence="3">
    <location>
        <begin position="48"/>
        <end position="62"/>
    </location>
</feature>
<feature type="compositionally biased region" description="Basic and acidic residues" evidence="3">
    <location>
        <begin position="70"/>
        <end position="80"/>
    </location>
</feature>
<feature type="compositionally biased region" description="Basic and acidic residues" evidence="3">
    <location>
        <begin position="326"/>
        <end position="336"/>
    </location>
</feature>
<feature type="modified residue" description="Phosphoserine" evidence="2">
    <location>
        <position position="349"/>
    </location>
</feature>
<feature type="modified residue" description="Phosphothreonine" evidence="5">
    <location>
        <position position="462"/>
    </location>
</feature>
<feature type="modified residue" description="Phosphoserine" evidence="5">
    <location>
        <position position="465"/>
    </location>
</feature>
<feature type="modified residue" description="Phosphoserine" evidence="5">
    <location>
        <position position="488"/>
    </location>
</feature>
<sequence length="634" mass="69704">MHPEVSEPPVDSVAEPSLEESAGDHGDAGPGIRKEEISETKETCAGPCTTSCPSQQQPSGDNGSEGFCTHSRDDREDRGPRMTKQFLQKLCKQHKLYVTPALNDTLYLHFKGFDRIENLEEYTGLRCLWLECNGIQRIENLQAQSELRCLFLQVNLLHKIENLEPLQKLDALNLSNNYIKTIENLSCLPVLNTLQMAHNRLETVADIEHLRECLRLCVLDLSHNALSDPEILSVLESMPCLRVLNLMGNPVTKHIPNYRRTVTVRLKHLTYLDDRPVFPKDRACAEAWARGGYAAEKEERRQWESREHKKITDSLEALAMIKRRAEERKKARDRGETPLPDSEGSIPTSPEAEEKQPMGEIQKKMELFVEESFEAKDELFPETPGGEKELHVVVVNGAVENPDLSGSLAHNQTPVVVTPEESTSPVAATDGARTEDIEAVAVEIKERLFIDDLPDLEDAEGTDVSVEDQIKETDIPRIQAISSLSDDSDPELDELSLSTSEATPTGATGALSHIFAISKGPSTAATVPFTDICKPIATTDLESQGQDCGAAASRPLIQELNDEPAEEAANQPLPPQTCASDPALAHPSEDGDSDSQLPAATLLGDGAEDEAESSVHPKEPSTRVGLEDIEFGLD</sequence>
<protein>
    <recommendedName>
        <fullName>Dynein axonemal assembly factor 1</fullName>
    </recommendedName>
    <alternativeName>
        <fullName>Leucine-rich repeat-containing protein 50</fullName>
    </alternativeName>
</protein>
<gene>
    <name type="primary">Dnaaf1</name>
    <name type="synonym">Lrrc50</name>
</gene>